<sequence length="326" mass="35736">MSNISVIGTGSYVPNNIITNDFLSTIVDTSDEWIRTRTGILERRISKEENTIYMAIESAKEAIKNANIEANDLDLIIVATLTPDNFMPSTACSVQKEIGAINALCFDISAACSGFIYGLEIACSMLKNSFRNKALIIGAENLSKIVDWKDRNTCVLFGDGAGAAILSKTKEEGILEFHSGSNGLKGEHLTCGVLKANNISNKNDRLENDNFIKMNGKEIFRFAVGAMSETICNIQEKTKWDLSEVKYIISHQANSRIIEYTAKKLNTSKDKFYMNLDKYGNTSAASIPIALDEMNKKGLLNKQDKIILVGFGGGLTFGGVAIVWSI</sequence>
<comment type="function">
    <text evidence="1">Catalyzes the condensation reaction of fatty acid synthesis by the addition to an acyl acceptor of two carbons from malonyl-ACP. Catalyzes the first condensation reaction which initiates fatty acid synthesis and may therefore play a role in governing the total rate of fatty acid production. Possesses both acetoacetyl-ACP synthase and acetyl transacylase activities. Its substrate specificity determines the biosynthesis of branched-chain and/or straight-chain of fatty acids.</text>
</comment>
<comment type="catalytic activity">
    <reaction evidence="1">
        <text>malonyl-[ACP] + acetyl-CoA + H(+) = 3-oxobutanoyl-[ACP] + CO2 + CoA</text>
        <dbReference type="Rhea" id="RHEA:12080"/>
        <dbReference type="Rhea" id="RHEA-COMP:9623"/>
        <dbReference type="Rhea" id="RHEA-COMP:9625"/>
        <dbReference type="ChEBI" id="CHEBI:15378"/>
        <dbReference type="ChEBI" id="CHEBI:16526"/>
        <dbReference type="ChEBI" id="CHEBI:57287"/>
        <dbReference type="ChEBI" id="CHEBI:57288"/>
        <dbReference type="ChEBI" id="CHEBI:78449"/>
        <dbReference type="ChEBI" id="CHEBI:78450"/>
        <dbReference type="EC" id="2.3.1.180"/>
    </reaction>
</comment>
<comment type="pathway">
    <text evidence="1">Lipid metabolism; fatty acid biosynthesis.</text>
</comment>
<comment type="subunit">
    <text evidence="1">Homodimer.</text>
</comment>
<comment type="subcellular location">
    <subcellularLocation>
        <location evidence="1">Cytoplasm</location>
    </subcellularLocation>
</comment>
<comment type="domain">
    <text evidence="1">The last Arg residue of the ACP-binding site is essential for the weak association between ACP/AcpP and FabH.</text>
</comment>
<comment type="similarity">
    <text evidence="1">Belongs to the thiolase-like superfamily. FabH family.</text>
</comment>
<gene>
    <name evidence="1" type="primary">fabH</name>
    <name type="ordered locus">CLJ_B3933</name>
</gene>
<keyword id="KW-0012">Acyltransferase</keyword>
<keyword id="KW-0963">Cytoplasm</keyword>
<keyword id="KW-0275">Fatty acid biosynthesis</keyword>
<keyword id="KW-0276">Fatty acid metabolism</keyword>
<keyword id="KW-0444">Lipid biosynthesis</keyword>
<keyword id="KW-0443">Lipid metabolism</keyword>
<keyword id="KW-0511">Multifunctional enzyme</keyword>
<keyword id="KW-0808">Transferase</keyword>
<proteinExistence type="inferred from homology"/>
<evidence type="ECO:0000255" key="1">
    <source>
        <dbReference type="HAMAP-Rule" id="MF_01815"/>
    </source>
</evidence>
<reference key="1">
    <citation type="submission" date="2008-05" db="EMBL/GenBank/DDBJ databases">
        <title>Genome sequence of Clostridium botulinum Ba4 strain 657.</title>
        <authorList>
            <person name="Shrivastava S."/>
            <person name="Brown J.L."/>
            <person name="Bruce D."/>
            <person name="Detter C."/>
            <person name="Munk C."/>
            <person name="Smith L.A."/>
            <person name="Smith T.J."/>
            <person name="Sutton G."/>
            <person name="Brettin T.S."/>
        </authorList>
    </citation>
    <scope>NUCLEOTIDE SEQUENCE [LARGE SCALE GENOMIC DNA]</scope>
    <source>
        <strain>657 / Type Ba4</strain>
    </source>
</reference>
<feature type="chain" id="PRO_1000215996" description="Beta-ketoacyl-[acyl-carrier-protein] synthase III">
    <location>
        <begin position="1"/>
        <end position="326"/>
    </location>
</feature>
<feature type="region of interest" description="ACP-binding" evidence="1">
    <location>
        <begin position="252"/>
        <end position="256"/>
    </location>
</feature>
<feature type="active site" evidence="1">
    <location>
        <position position="112"/>
    </location>
</feature>
<feature type="active site" evidence="1">
    <location>
        <position position="251"/>
    </location>
</feature>
<feature type="active site" evidence="1">
    <location>
        <position position="281"/>
    </location>
</feature>
<dbReference type="EC" id="2.3.1.180" evidence="1"/>
<dbReference type="EMBL" id="CP001083">
    <property type="protein sequence ID" value="ACQ54921.1"/>
    <property type="molecule type" value="Genomic_DNA"/>
</dbReference>
<dbReference type="RefSeq" id="WP_012721347.1">
    <property type="nucleotide sequence ID" value="NC_012658.1"/>
</dbReference>
<dbReference type="SMR" id="C3KWF7"/>
<dbReference type="KEGG" id="cbi:CLJ_B3933"/>
<dbReference type="HOGENOM" id="CLU_039592_3_1_9"/>
<dbReference type="UniPathway" id="UPA00094"/>
<dbReference type="Proteomes" id="UP000002333">
    <property type="component" value="Chromosome"/>
</dbReference>
<dbReference type="GO" id="GO:0005737">
    <property type="term" value="C:cytoplasm"/>
    <property type="evidence" value="ECO:0007669"/>
    <property type="project" value="UniProtKB-SubCell"/>
</dbReference>
<dbReference type="GO" id="GO:0004315">
    <property type="term" value="F:3-oxoacyl-[acyl-carrier-protein] synthase activity"/>
    <property type="evidence" value="ECO:0007669"/>
    <property type="project" value="InterPro"/>
</dbReference>
<dbReference type="GO" id="GO:0033818">
    <property type="term" value="F:beta-ketoacyl-acyl-carrier-protein synthase III activity"/>
    <property type="evidence" value="ECO:0007669"/>
    <property type="project" value="UniProtKB-UniRule"/>
</dbReference>
<dbReference type="GO" id="GO:0006633">
    <property type="term" value="P:fatty acid biosynthetic process"/>
    <property type="evidence" value="ECO:0007669"/>
    <property type="project" value="UniProtKB-UniRule"/>
</dbReference>
<dbReference type="GO" id="GO:0044550">
    <property type="term" value="P:secondary metabolite biosynthetic process"/>
    <property type="evidence" value="ECO:0007669"/>
    <property type="project" value="TreeGrafter"/>
</dbReference>
<dbReference type="CDD" id="cd00830">
    <property type="entry name" value="KAS_III"/>
    <property type="match status" value="1"/>
</dbReference>
<dbReference type="FunFam" id="3.40.47.10:FF:000004">
    <property type="entry name" value="3-oxoacyl-[acyl-carrier-protein] synthase 3"/>
    <property type="match status" value="1"/>
</dbReference>
<dbReference type="Gene3D" id="3.40.47.10">
    <property type="match status" value="1"/>
</dbReference>
<dbReference type="HAMAP" id="MF_01815">
    <property type="entry name" value="FabH"/>
    <property type="match status" value="1"/>
</dbReference>
<dbReference type="InterPro" id="IPR013747">
    <property type="entry name" value="ACP_syn_III_C"/>
</dbReference>
<dbReference type="InterPro" id="IPR013751">
    <property type="entry name" value="ACP_syn_III_N"/>
</dbReference>
<dbReference type="InterPro" id="IPR004655">
    <property type="entry name" value="FabH"/>
</dbReference>
<dbReference type="InterPro" id="IPR016039">
    <property type="entry name" value="Thiolase-like"/>
</dbReference>
<dbReference type="NCBIfam" id="TIGR00747">
    <property type="entry name" value="fabH"/>
    <property type="match status" value="1"/>
</dbReference>
<dbReference type="NCBIfam" id="NF006829">
    <property type="entry name" value="PRK09352.1"/>
    <property type="match status" value="1"/>
</dbReference>
<dbReference type="PANTHER" id="PTHR34069">
    <property type="entry name" value="3-OXOACYL-[ACYL-CARRIER-PROTEIN] SYNTHASE 3"/>
    <property type="match status" value="1"/>
</dbReference>
<dbReference type="PANTHER" id="PTHR34069:SF2">
    <property type="entry name" value="BETA-KETOACYL-[ACYL-CARRIER-PROTEIN] SYNTHASE III"/>
    <property type="match status" value="1"/>
</dbReference>
<dbReference type="Pfam" id="PF08545">
    <property type="entry name" value="ACP_syn_III"/>
    <property type="match status" value="1"/>
</dbReference>
<dbReference type="Pfam" id="PF08541">
    <property type="entry name" value="ACP_syn_III_C"/>
    <property type="match status" value="1"/>
</dbReference>
<dbReference type="SUPFAM" id="SSF53901">
    <property type="entry name" value="Thiolase-like"/>
    <property type="match status" value="1"/>
</dbReference>
<protein>
    <recommendedName>
        <fullName evidence="1">Beta-ketoacyl-[acyl-carrier-protein] synthase III</fullName>
        <shortName evidence="1">Beta-ketoacyl-ACP synthase III</shortName>
        <shortName evidence="1">KAS III</shortName>
        <ecNumber evidence="1">2.3.1.180</ecNumber>
    </recommendedName>
    <alternativeName>
        <fullName evidence="1">3-oxoacyl-[acyl-carrier-protein] synthase 3</fullName>
    </alternativeName>
    <alternativeName>
        <fullName evidence="1">3-oxoacyl-[acyl-carrier-protein] synthase III</fullName>
    </alternativeName>
</protein>
<organism>
    <name type="scientific">Clostridium botulinum (strain 657 / Type Ba4)</name>
    <dbReference type="NCBI Taxonomy" id="515621"/>
    <lineage>
        <taxon>Bacteria</taxon>
        <taxon>Bacillati</taxon>
        <taxon>Bacillota</taxon>
        <taxon>Clostridia</taxon>
        <taxon>Eubacteriales</taxon>
        <taxon>Clostridiaceae</taxon>
        <taxon>Clostridium</taxon>
    </lineage>
</organism>
<name>FABH_CLOB6</name>
<accession>C3KWF7</accession>